<comment type="function">
    <text evidence="1">Binds to the 23S rRNA.</text>
</comment>
<comment type="similarity">
    <text evidence="1">Belongs to the bacterial ribosomal protein bL9 family.</text>
</comment>
<organism>
    <name type="scientific">Prochlorococcus marinus (strain NATL2A)</name>
    <dbReference type="NCBI Taxonomy" id="59920"/>
    <lineage>
        <taxon>Bacteria</taxon>
        <taxon>Bacillati</taxon>
        <taxon>Cyanobacteriota</taxon>
        <taxon>Cyanophyceae</taxon>
        <taxon>Synechococcales</taxon>
        <taxon>Prochlorococcaceae</taxon>
        <taxon>Prochlorococcus</taxon>
    </lineage>
</organism>
<sequence>MAKRVQVVLNEDIKSLGNDGDLVEVAPGFARNFLLPNKKALPVTPTVLKQVEHRRAKQAEKEAAKKQEAIDFQTALTTIGRFTVKKQVGEDGVLFGTVTNGDVAEVVKEATKKDIDRRDISIPEIHGVGKYKVQIKLHNEVNAEINLEVTSY</sequence>
<keyword id="KW-1185">Reference proteome</keyword>
<keyword id="KW-0687">Ribonucleoprotein</keyword>
<keyword id="KW-0689">Ribosomal protein</keyword>
<keyword id="KW-0694">RNA-binding</keyword>
<keyword id="KW-0699">rRNA-binding</keyword>
<feature type="chain" id="PRO_0000236567" description="Large ribosomal subunit protein bL9">
    <location>
        <begin position="1"/>
        <end position="152"/>
    </location>
</feature>
<gene>
    <name evidence="1" type="primary">rplI</name>
    <name evidence="1" type="synonym">rpl9</name>
    <name type="ordered locus">PMN2A_1272</name>
</gene>
<name>RL9_PROMT</name>
<proteinExistence type="inferred from homology"/>
<protein>
    <recommendedName>
        <fullName evidence="1">Large ribosomal subunit protein bL9</fullName>
    </recommendedName>
    <alternativeName>
        <fullName evidence="2">50S ribosomal protein L9</fullName>
    </alternativeName>
</protein>
<dbReference type="EMBL" id="CP000095">
    <property type="protein sequence ID" value="AAZ58762.1"/>
    <property type="molecule type" value="Genomic_DNA"/>
</dbReference>
<dbReference type="RefSeq" id="WP_011295616.1">
    <property type="nucleotide sequence ID" value="NC_007335.2"/>
</dbReference>
<dbReference type="SMR" id="Q46IB6"/>
<dbReference type="STRING" id="59920.PMN2A_1272"/>
<dbReference type="KEGG" id="pmn:PMN2A_1272"/>
<dbReference type="HOGENOM" id="CLU_078938_5_1_3"/>
<dbReference type="OrthoDB" id="9788336at2"/>
<dbReference type="PhylomeDB" id="Q46IB6"/>
<dbReference type="Proteomes" id="UP000002535">
    <property type="component" value="Chromosome"/>
</dbReference>
<dbReference type="GO" id="GO:1990904">
    <property type="term" value="C:ribonucleoprotein complex"/>
    <property type="evidence" value="ECO:0007669"/>
    <property type="project" value="UniProtKB-KW"/>
</dbReference>
<dbReference type="GO" id="GO:0005840">
    <property type="term" value="C:ribosome"/>
    <property type="evidence" value="ECO:0007669"/>
    <property type="project" value="UniProtKB-KW"/>
</dbReference>
<dbReference type="GO" id="GO:0019843">
    <property type="term" value="F:rRNA binding"/>
    <property type="evidence" value="ECO:0007669"/>
    <property type="project" value="UniProtKB-UniRule"/>
</dbReference>
<dbReference type="GO" id="GO:0003735">
    <property type="term" value="F:structural constituent of ribosome"/>
    <property type="evidence" value="ECO:0007669"/>
    <property type="project" value="InterPro"/>
</dbReference>
<dbReference type="GO" id="GO:0006412">
    <property type="term" value="P:translation"/>
    <property type="evidence" value="ECO:0007669"/>
    <property type="project" value="UniProtKB-UniRule"/>
</dbReference>
<dbReference type="Gene3D" id="3.10.430.100">
    <property type="entry name" value="Ribosomal protein L9, C-terminal domain"/>
    <property type="match status" value="1"/>
</dbReference>
<dbReference type="Gene3D" id="3.40.5.10">
    <property type="entry name" value="Ribosomal protein L9, N-terminal domain"/>
    <property type="match status" value="1"/>
</dbReference>
<dbReference type="HAMAP" id="MF_00503">
    <property type="entry name" value="Ribosomal_bL9"/>
    <property type="match status" value="1"/>
</dbReference>
<dbReference type="InterPro" id="IPR000244">
    <property type="entry name" value="Ribosomal_bL9"/>
</dbReference>
<dbReference type="InterPro" id="IPR009027">
    <property type="entry name" value="Ribosomal_bL9/RNase_H1_N"/>
</dbReference>
<dbReference type="InterPro" id="IPR020594">
    <property type="entry name" value="Ribosomal_bL9_bac/chp"/>
</dbReference>
<dbReference type="InterPro" id="IPR020069">
    <property type="entry name" value="Ribosomal_bL9_C"/>
</dbReference>
<dbReference type="InterPro" id="IPR036791">
    <property type="entry name" value="Ribosomal_bL9_C_sf"/>
</dbReference>
<dbReference type="InterPro" id="IPR020070">
    <property type="entry name" value="Ribosomal_bL9_N"/>
</dbReference>
<dbReference type="InterPro" id="IPR036935">
    <property type="entry name" value="Ribosomal_bL9_N_sf"/>
</dbReference>
<dbReference type="NCBIfam" id="TIGR00158">
    <property type="entry name" value="L9"/>
    <property type="match status" value="1"/>
</dbReference>
<dbReference type="PANTHER" id="PTHR21368">
    <property type="entry name" value="50S RIBOSOMAL PROTEIN L9"/>
    <property type="match status" value="1"/>
</dbReference>
<dbReference type="Pfam" id="PF03948">
    <property type="entry name" value="Ribosomal_L9_C"/>
    <property type="match status" value="1"/>
</dbReference>
<dbReference type="Pfam" id="PF01281">
    <property type="entry name" value="Ribosomal_L9_N"/>
    <property type="match status" value="1"/>
</dbReference>
<dbReference type="SUPFAM" id="SSF55658">
    <property type="entry name" value="L9 N-domain-like"/>
    <property type="match status" value="1"/>
</dbReference>
<dbReference type="SUPFAM" id="SSF55653">
    <property type="entry name" value="Ribosomal protein L9 C-domain"/>
    <property type="match status" value="1"/>
</dbReference>
<dbReference type="PROSITE" id="PS00651">
    <property type="entry name" value="RIBOSOMAL_L9"/>
    <property type="match status" value="1"/>
</dbReference>
<evidence type="ECO:0000255" key="1">
    <source>
        <dbReference type="HAMAP-Rule" id="MF_00503"/>
    </source>
</evidence>
<evidence type="ECO:0000305" key="2"/>
<accession>Q46IB6</accession>
<reference key="1">
    <citation type="journal article" date="2007" name="PLoS Genet.">
        <title>Patterns and implications of gene gain and loss in the evolution of Prochlorococcus.</title>
        <authorList>
            <person name="Kettler G.C."/>
            <person name="Martiny A.C."/>
            <person name="Huang K."/>
            <person name="Zucker J."/>
            <person name="Coleman M.L."/>
            <person name="Rodrigue S."/>
            <person name="Chen F."/>
            <person name="Lapidus A."/>
            <person name="Ferriera S."/>
            <person name="Johnson J."/>
            <person name="Steglich C."/>
            <person name="Church G.M."/>
            <person name="Richardson P."/>
            <person name="Chisholm S.W."/>
        </authorList>
    </citation>
    <scope>NUCLEOTIDE SEQUENCE [LARGE SCALE GENOMIC DNA]</scope>
    <source>
        <strain>NATL2A</strain>
    </source>
</reference>